<feature type="transit peptide" description="Mitochondrion" evidence="1">
    <location>
        <begin position="1"/>
        <end position="110"/>
    </location>
</feature>
<feature type="chain" id="PRO_0000363463" description="Pentatricopeptide repeat-containing protein At4g32450, mitochondrial">
    <location>
        <begin position="111"/>
        <end position="537"/>
    </location>
</feature>
<feature type="repeat" description="PPR 1">
    <location>
        <begin position="145"/>
        <end position="179"/>
    </location>
</feature>
<feature type="repeat" description="PPR 2">
    <location>
        <begin position="180"/>
        <end position="210"/>
    </location>
</feature>
<feature type="repeat" description="PPR 3">
    <location>
        <begin position="215"/>
        <end position="249"/>
    </location>
</feature>
<feature type="repeat" description="PPR 4">
    <location>
        <begin position="250"/>
        <end position="280"/>
    </location>
</feature>
<feature type="repeat" description="PPR 5">
    <location>
        <begin position="281"/>
        <end position="316"/>
    </location>
</feature>
<feature type="repeat" description="PPR 6">
    <location>
        <begin position="317"/>
        <end position="347"/>
    </location>
</feature>
<feature type="region of interest" description="Disordered" evidence="2">
    <location>
        <begin position="113"/>
        <end position="148"/>
    </location>
</feature>
<feature type="region of interest" description="Type E(+) motif">
    <location>
        <begin position="412"/>
        <end position="442"/>
    </location>
</feature>
<feature type="region of interest" description="Type DYW motif">
    <location>
        <begin position="443"/>
        <end position="537"/>
    </location>
</feature>
<feature type="compositionally biased region" description="Polar residues" evidence="2">
    <location>
        <begin position="113"/>
        <end position="140"/>
    </location>
</feature>
<feature type="sequence conflict" description="In Ref. 4; BAD43544." evidence="3" ref="4">
    <original>I</original>
    <variation>M</variation>
    <location>
        <position position="187"/>
    </location>
</feature>
<dbReference type="EMBL" id="AL034567">
    <property type="protein sequence ID" value="CAA22572.1"/>
    <property type="molecule type" value="Genomic_DNA"/>
</dbReference>
<dbReference type="EMBL" id="AL161581">
    <property type="protein sequence ID" value="CAB79962.1"/>
    <property type="molecule type" value="Genomic_DNA"/>
</dbReference>
<dbReference type="EMBL" id="CP002687">
    <property type="protein sequence ID" value="AEE86062.1"/>
    <property type="molecule type" value="Genomic_DNA"/>
</dbReference>
<dbReference type="EMBL" id="BT015164">
    <property type="protein sequence ID" value="AAT85760.1"/>
    <property type="molecule type" value="mRNA"/>
</dbReference>
<dbReference type="EMBL" id="AK175781">
    <property type="protein sequence ID" value="BAD43544.1"/>
    <property type="molecule type" value="mRNA"/>
</dbReference>
<dbReference type="PIR" id="T05355">
    <property type="entry name" value="T05355"/>
</dbReference>
<dbReference type="RefSeq" id="NP_194971.1">
    <property type="nucleotide sequence ID" value="NM_119397.2"/>
</dbReference>
<dbReference type="SMR" id="Q9SUU7"/>
<dbReference type="BioGRID" id="14666">
    <property type="interactions" value="1"/>
</dbReference>
<dbReference type="FunCoup" id="Q9SUU7">
    <property type="interactions" value="285"/>
</dbReference>
<dbReference type="IntAct" id="Q9SUU7">
    <property type="interactions" value="1"/>
</dbReference>
<dbReference type="STRING" id="3702.Q9SUU7"/>
<dbReference type="PaxDb" id="3702-AT4G32450.1"/>
<dbReference type="ProteomicsDB" id="248994"/>
<dbReference type="EnsemblPlants" id="AT4G32450.1">
    <property type="protein sequence ID" value="AT4G32450.1"/>
    <property type="gene ID" value="AT4G32450"/>
</dbReference>
<dbReference type="GeneID" id="829380"/>
<dbReference type="Gramene" id="AT4G32450.1">
    <property type="protein sequence ID" value="AT4G32450.1"/>
    <property type="gene ID" value="AT4G32450"/>
</dbReference>
<dbReference type="KEGG" id="ath:AT4G32450"/>
<dbReference type="Araport" id="AT4G32450"/>
<dbReference type="TAIR" id="AT4G32450">
    <property type="gene designation" value="MEF8S"/>
</dbReference>
<dbReference type="eggNOG" id="KOG4197">
    <property type="taxonomic scope" value="Eukaryota"/>
</dbReference>
<dbReference type="HOGENOM" id="CLU_002706_45_0_1"/>
<dbReference type="InParanoid" id="Q9SUU7"/>
<dbReference type="OMA" id="RCQDMVE"/>
<dbReference type="PhylomeDB" id="Q9SUU7"/>
<dbReference type="PRO" id="PR:Q9SUU7"/>
<dbReference type="Proteomes" id="UP000006548">
    <property type="component" value="Chromosome 4"/>
</dbReference>
<dbReference type="ExpressionAtlas" id="Q9SUU7">
    <property type="expression patterns" value="baseline and differential"/>
</dbReference>
<dbReference type="GO" id="GO:0005739">
    <property type="term" value="C:mitochondrion"/>
    <property type="evidence" value="ECO:0007669"/>
    <property type="project" value="UniProtKB-SubCell"/>
</dbReference>
<dbReference type="GO" id="GO:0003723">
    <property type="term" value="F:RNA binding"/>
    <property type="evidence" value="ECO:0007669"/>
    <property type="project" value="InterPro"/>
</dbReference>
<dbReference type="GO" id="GO:0008270">
    <property type="term" value="F:zinc ion binding"/>
    <property type="evidence" value="ECO:0007669"/>
    <property type="project" value="InterPro"/>
</dbReference>
<dbReference type="GO" id="GO:0009451">
    <property type="term" value="P:RNA modification"/>
    <property type="evidence" value="ECO:0007669"/>
    <property type="project" value="InterPro"/>
</dbReference>
<dbReference type="FunFam" id="1.25.40.10:FF:000503">
    <property type="entry name" value="Pentatricopeptide repeat-containing protein, mitochondrial"/>
    <property type="match status" value="1"/>
</dbReference>
<dbReference type="Gene3D" id="1.25.40.10">
    <property type="entry name" value="Tetratricopeptide repeat domain"/>
    <property type="match status" value="1"/>
</dbReference>
<dbReference type="InterPro" id="IPR032867">
    <property type="entry name" value="DYW_dom"/>
</dbReference>
<dbReference type="InterPro" id="IPR002885">
    <property type="entry name" value="Pentatricopeptide_rpt"/>
</dbReference>
<dbReference type="InterPro" id="IPR046960">
    <property type="entry name" value="PPR_At4g14850-like_plant"/>
</dbReference>
<dbReference type="InterPro" id="IPR011990">
    <property type="entry name" value="TPR-like_helical_dom_sf"/>
</dbReference>
<dbReference type="NCBIfam" id="TIGR00756">
    <property type="entry name" value="PPR"/>
    <property type="match status" value="2"/>
</dbReference>
<dbReference type="PANTHER" id="PTHR47926:SF388">
    <property type="entry name" value="DYW DOMAIN-CONTAINING PROTEIN"/>
    <property type="match status" value="1"/>
</dbReference>
<dbReference type="PANTHER" id="PTHR47926">
    <property type="entry name" value="PENTATRICOPEPTIDE REPEAT-CONTAINING PROTEIN"/>
    <property type="match status" value="1"/>
</dbReference>
<dbReference type="Pfam" id="PF14432">
    <property type="entry name" value="DYW_deaminase"/>
    <property type="match status" value="1"/>
</dbReference>
<dbReference type="Pfam" id="PF01535">
    <property type="entry name" value="PPR"/>
    <property type="match status" value="2"/>
</dbReference>
<dbReference type="PROSITE" id="PS51375">
    <property type="entry name" value="PPR"/>
    <property type="match status" value="5"/>
</dbReference>
<accession>Q9SUU7</accession>
<accession>Q680T6</accession>
<reference key="1">
    <citation type="journal article" date="1999" name="Nature">
        <title>Sequence and analysis of chromosome 4 of the plant Arabidopsis thaliana.</title>
        <authorList>
            <person name="Mayer K.F.X."/>
            <person name="Schueller C."/>
            <person name="Wambutt R."/>
            <person name="Murphy G."/>
            <person name="Volckaert G."/>
            <person name="Pohl T."/>
            <person name="Duesterhoeft A."/>
            <person name="Stiekema W."/>
            <person name="Entian K.-D."/>
            <person name="Terryn N."/>
            <person name="Harris B."/>
            <person name="Ansorge W."/>
            <person name="Brandt P."/>
            <person name="Grivell L.A."/>
            <person name="Rieger M."/>
            <person name="Weichselgartner M."/>
            <person name="de Simone V."/>
            <person name="Obermaier B."/>
            <person name="Mache R."/>
            <person name="Mueller M."/>
            <person name="Kreis M."/>
            <person name="Delseny M."/>
            <person name="Puigdomenech P."/>
            <person name="Watson M."/>
            <person name="Schmidtheini T."/>
            <person name="Reichert B."/>
            <person name="Portetelle D."/>
            <person name="Perez-Alonso M."/>
            <person name="Boutry M."/>
            <person name="Bancroft I."/>
            <person name="Vos P."/>
            <person name="Hoheisel J."/>
            <person name="Zimmermann W."/>
            <person name="Wedler H."/>
            <person name="Ridley P."/>
            <person name="Langham S.-A."/>
            <person name="McCullagh B."/>
            <person name="Bilham L."/>
            <person name="Robben J."/>
            <person name="van der Schueren J."/>
            <person name="Grymonprez B."/>
            <person name="Chuang Y.-J."/>
            <person name="Vandenbussche F."/>
            <person name="Braeken M."/>
            <person name="Weltjens I."/>
            <person name="Voet M."/>
            <person name="Bastiaens I."/>
            <person name="Aert R."/>
            <person name="Defoor E."/>
            <person name="Weitzenegger T."/>
            <person name="Bothe G."/>
            <person name="Ramsperger U."/>
            <person name="Hilbert H."/>
            <person name="Braun M."/>
            <person name="Holzer E."/>
            <person name="Brandt A."/>
            <person name="Peters S."/>
            <person name="van Staveren M."/>
            <person name="Dirkse W."/>
            <person name="Mooijman P."/>
            <person name="Klein Lankhorst R."/>
            <person name="Rose M."/>
            <person name="Hauf J."/>
            <person name="Koetter P."/>
            <person name="Berneiser S."/>
            <person name="Hempel S."/>
            <person name="Feldpausch M."/>
            <person name="Lamberth S."/>
            <person name="Van den Daele H."/>
            <person name="De Keyser A."/>
            <person name="Buysshaert C."/>
            <person name="Gielen J."/>
            <person name="Villarroel R."/>
            <person name="De Clercq R."/>
            <person name="van Montagu M."/>
            <person name="Rogers J."/>
            <person name="Cronin A."/>
            <person name="Quail M.A."/>
            <person name="Bray-Allen S."/>
            <person name="Clark L."/>
            <person name="Doggett J."/>
            <person name="Hall S."/>
            <person name="Kay M."/>
            <person name="Lennard N."/>
            <person name="McLay K."/>
            <person name="Mayes R."/>
            <person name="Pettett A."/>
            <person name="Rajandream M.A."/>
            <person name="Lyne M."/>
            <person name="Benes V."/>
            <person name="Rechmann S."/>
            <person name="Borkova D."/>
            <person name="Bloecker H."/>
            <person name="Scharfe M."/>
            <person name="Grimm M."/>
            <person name="Loehnert T.-H."/>
            <person name="Dose S."/>
            <person name="de Haan M."/>
            <person name="Maarse A.C."/>
            <person name="Schaefer M."/>
            <person name="Mueller-Auer S."/>
            <person name="Gabel C."/>
            <person name="Fuchs M."/>
            <person name="Fartmann B."/>
            <person name="Granderath K."/>
            <person name="Dauner D."/>
            <person name="Herzl A."/>
            <person name="Neumann S."/>
            <person name="Argiriou A."/>
            <person name="Vitale D."/>
            <person name="Liguori R."/>
            <person name="Piravandi E."/>
            <person name="Massenet O."/>
            <person name="Quigley F."/>
            <person name="Clabauld G."/>
            <person name="Muendlein A."/>
            <person name="Felber R."/>
            <person name="Schnabl S."/>
            <person name="Hiller R."/>
            <person name="Schmidt W."/>
            <person name="Lecharny A."/>
            <person name="Aubourg S."/>
            <person name="Chefdor F."/>
            <person name="Cooke R."/>
            <person name="Berger C."/>
            <person name="Monfort A."/>
            <person name="Casacuberta E."/>
            <person name="Gibbons T."/>
            <person name="Weber N."/>
            <person name="Vandenbol M."/>
            <person name="Bargues M."/>
            <person name="Terol J."/>
            <person name="Torres A."/>
            <person name="Perez-Perez A."/>
            <person name="Purnelle B."/>
            <person name="Bent E."/>
            <person name="Johnson S."/>
            <person name="Tacon D."/>
            <person name="Jesse T."/>
            <person name="Heijnen L."/>
            <person name="Schwarz S."/>
            <person name="Scholler P."/>
            <person name="Heber S."/>
            <person name="Francs P."/>
            <person name="Bielke C."/>
            <person name="Frishman D."/>
            <person name="Haase D."/>
            <person name="Lemcke K."/>
            <person name="Mewes H.-W."/>
            <person name="Stocker S."/>
            <person name="Zaccaria P."/>
            <person name="Bevan M."/>
            <person name="Wilson R.K."/>
            <person name="de la Bastide M."/>
            <person name="Habermann K."/>
            <person name="Parnell L."/>
            <person name="Dedhia N."/>
            <person name="Gnoj L."/>
            <person name="Schutz K."/>
            <person name="Huang E."/>
            <person name="Spiegel L."/>
            <person name="Sekhon M."/>
            <person name="Murray J."/>
            <person name="Sheet P."/>
            <person name="Cordes M."/>
            <person name="Abu-Threideh J."/>
            <person name="Stoneking T."/>
            <person name="Kalicki J."/>
            <person name="Graves T."/>
            <person name="Harmon G."/>
            <person name="Edwards J."/>
            <person name="Latreille P."/>
            <person name="Courtney L."/>
            <person name="Cloud J."/>
            <person name="Abbott A."/>
            <person name="Scott K."/>
            <person name="Johnson D."/>
            <person name="Minx P."/>
            <person name="Bentley D."/>
            <person name="Fulton B."/>
            <person name="Miller N."/>
            <person name="Greco T."/>
            <person name="Kemp K."/>
            <person name="Kramer J."/>
            <person name="Fulton L."/>
            <person name="Mardis E."/>
            <person name="Dante M."/>
            <person name="Pepin K."/>
            <person name="Hillier L.W."/>
            <person name="Nelson J."/>
            <person name="Spieth J."/>
            <person name="Ryan E."/>
            <person name="Andrews S."/>
            <person name="Geisel C."/>
            <person name="Layman D."/>
            <person name="Du H."/>
            <person name="Ali J."/>
            <person name="Berghoff A."/>
            <person name="Jones K."/>
            <person name="Drone K."/>
            <person name="Cotton M."/>
            <person name="Joshu C."/>
            <person name="Antonoiu B."/>
            <person name="Zidanic M."/>
            <person name="Strong C."/>
            <person name="Sun H."/>
            <person name="Lamar B."/>
            <person name="Yordan C."/>
            <person name="Ma P."/>
            <person name="Zhong J."/>
            <person name="Preston R."/>
            <person name="Vil D."/>
            <person name="Shekher M."/>
            <person name="Matero A."/>
            <person name="Shah R."/>
            <person name="Swaby I.K."/>
            <person name="O'Shaughnessy A."/>
            <person name="Rodriguez M."/>
            <person name="Hoffman J."/>
            <person name="Till S."/>
            <person name="Granat S."/>
            <person name="Shohdy N."/>
            <person name="Hasegawa A."/>
            <person name="Hameed A."/>
            <person name="Lodhi M."/>
            <person name="Johnson A."/>
            <person name="Chen E."/>
            <person name="Marra M.A."/>
            <person name="Martienssen R."/>
            <person name="McCombie W.R."/>
        </authorList>
    </citation>
    <scope>NUCLEOTIDE SEQUENCE [LARGE SCALE GENOMIC DNA]</scope>
    <source>
        <strain>cv. Columbia</strain>
    </source>
</reference>
<reference key="2">
    <citation type="journal article" date="2017" name="Plant J.">
        <title>Araport11: a complete reannotation of the Arabidopsis thaliana reference genome.</title>
        <authorList>
            <person name="Cheng C.Y."/>
            <person name="Krishnakumar V."/>
            <person name="Chan A.P."/>
            <person name="Thibaud-Nissen F."/>
            <person name="Schobel S."/>
            <person name="Town C.D."/>
        </authorList>
    </citation>
    <scope>GENOME REANNOTATION</scope>
    <source>
        <strain>cv. Columbia</strain>
    </source>
</reference>
<reference key="3">
    <citation type="submission" date="2004-08" db="EMBL/GenBank/DDBJ databases">
        <title>Arabidopsis ORF clones.</title>
        <authorList>
            <person name="Cheuk R.F."/>
            <person name="Chen H."/>
            <person name="Kim C.J."/>
            <person name="Shinn P."/>
            <person name="Ecker J.R."/>
        </authorList>
    </citation>
    <scope>NUCLEOTIDE SEQUENCE [LARGE SCALE MRNA]</scope>
    <source>
        <strain>cv. Columbia</strain>
    </source>
</reference>
<reference key="4">
    <citation type="submission" date="2004-09" db="EMBL/GenBank/DDBJ databases">
        <title>Large-scale analysis of RIKEN Arabidopsis full-length (RAFL) cDNAs.</title>
        <authorList>
            <person name="Totoki Y."/>
            <person name="Seki M."/>
            <person name="Ishida J."/>
            <person name="Nakajima M."/>
            <person name="Enju A."/>
            <person name="Kamiya A."/>
            <person name="Narusaka M."/>
            <person name="Shin-i T."/>
            <person name="Nakagawa M."/>
            <person name="Sakamoto N."/>
            <person name="Oishi K."/>
            <person name="Kohara Y."/>
            <person name="Kobayashi M."/>
            <person name="Toyoda A."/>
            <person name="Sakaki Y."/>
            <person name="Sakurai T."/>
            <person name="Iida K."/>
            <person name="Akiyama K."/>
            <person name="Satou M."/>
            <person name="Toyoda T."/>
            <person name="Konagaya A."/>
            <person name="Carninci P."/>
            <person name="Kawai J."/>
            <person name="Hayashizaki Y."/>
            <person name="Shinozaki K."/>
        </authorList>
    </citation>
    <scope>NUCLEOTIDE SEQUENCE [LARGE SCALE MRNA]</scope>
    <source>
        <strain>cv. Columbia</strain>
    </source>
</reference>
<reference key="5">
    <citation type="journal article" date="2000" name="Plant Mol. Biol.">
        <title>In Arabidopsis thaliana, 1% of the genome codes for a novel protein family unique to plants.</title>
        <authorList>
            <person name="Aubourg S."/>
            <person name="Boudet N."/>
            <person name="Kreis M."/>
            <person name="Lecharny A."/>
        </authorList>
    </citation>
    <scope>GENE FAMILY</scope>
</reference>
<reference key="6">
    <citation type="journal article" date="2004" name="Plant Cell">
        <title>Genome-wide analysis of Arabidopsis pentatricopeptide repeat proteins reveals their essential role in organelle biogenesis.</title>
        <authorList>
            <person name="Lurin C."/>
            <person name="Andres C."/>
            <person name="Aubourg S."/>
            <person name="Bellaoui M."/>
            <person name="Bitton F."/>
            <person name="Bruyere C."/>
            <person name="Caboche M."/>
            <person name="Debast C."/>
            <person name="Gualberto J."/>
            <person name="Hoffmann B."/>
            <person name="Lecharny A."/>
            <person name="Le Ret M."/>
            <person name="Martin-Magniette M.-L."/>
            <person name="Mireau H."/>
            <person name="Peeters N."/>
            <person name="Renou J.-P."/>
            <person name="Szurek B."/>
            <person name="Taconnat L."/>
            <person name="Small I."/>
        </authorList>
    </citation>
    <scope>GENE FAMILY</scope>
</reference>
<comment type="subcellular location">
    <subcellularLocation>
        <location evidence="3">Mitochondrion</location>
    </subcellularLocation>
</comment>
<comment type="similarity">
    <text evidence="3">Belongs to the PPR family. PCMP-H subfamily.</text>
</comment>
<comment type="online information" name="Pentatricopeptide repeat proteins">
    <link uri="https://ppr.plantenergy.uwa.edu.au"/>
</comment>
<protein>
    <recommendedName>
        <fullName>Pentatricopeptide repeat-containing protein At4g32450, mitochondrial</fullName>
    </recommendedName>
</protein>
<gene>
    <name type="primary">PCMP-H63</name>
    <name type="ordered locus">At4g32450</name>
    <name type="ORF">F8B4.150</name>
</gene>
<proteinExistence type="evidence at transcript level"/>
<evidence type="ECO:0000255" key="1"/>
<evidence type="ECO:0000256" key="2">
    <source>
        <dbReference type="SAM" id="MobiDB-lite"/>
    </source>
</evidence>
<evidence type="ECO:0000305" key="3"/>
<sequence>MIYTLTRGSLLGSTCKLRYSSLFSYLSTAALRLGFENPTNGNPMDNSSHHIGYVNGFNGGEQSLGGFQQNSYEQSLNPVSGQNPTNRFYQNGYNRNQSYGEHSEIINQRNQNWQSSDGCSSYGTTGNGVPQENNTGGNHFQQDHSGHSSLDELDSICREGKVKKAVEIIKSWRNEGYVVDLPRLFWIAQLCGDAQALQEAKVVHEFITSSVGISDISAYNSIIEMYSGCGSVEDALTVFNSMPERNLETWCGVIRCFAKNGQGEDAIDTFSRFKQEGNKPDGEMFKEIFFACGVLGDMNEGLLHFESMYKEYGIIPCMEHYVSLVKMLAEPGYLDEALRFVESMEPNVDLWETLMNLSRVHGDLILGDRCQDMVEQLDASRLNKESKAGLVPVKSSDLVKEKLQRMAKGPNYGIRYMAAGDISRPENRELYMALKSLKEHMIEIGYVPLSKLALHDVDQESKDENLFNHNERFAFISTFLDTPARSLIRVMKNLRVCADCHNALKLMSKIVGRELISRDAKRFHHMKDGVCSCREYW</sequence>
<keyword id="KW-0496">Mitochondrion</keyword>
<keyword id="KW-1185">Reference proteome</keyword>
<keyword id="KW-0677">Repeat</keyword>
<keyword id="KW-0809">Transit peptide</keyword>
<name>PP346_ARATH</name>
<organism>
    <name type="scientific">Arabidopsis thaliana</name>
    <name type="common">Mouse-ear cress</name>
    <dbReference type="NCBI Taxonomy" id="3702"/>
    <lineage>
        <taxon>Eukaryota</taxon>
        <taxon>Viridiplantae</taxon>
        <taxon>Streptophyta</taxon>
        <taxon>Embryophyta</taxon>
        <taxon>Tracheophyta</taxon>
        <taxon>Spermatophyta</taxon>
        <taxon>Magnoliopsida</taxon>
        <taxon>eudicotyledons</taxon>
        <taxon>Gunneridae</taxon>
        <taxon>Pentapetalae</taxon>
        <taxon>rosids</taxon>
        <taxon>malvids</taxon>
        <taxon>Brassicales</taxon>
        <taxon>Brassicaceae</taxon>
        <taxon>Camelineae</taxon>
        <taxon>Arabidopsis</taxon>
    </lineage>
</organism>